<dbReference type="EMBL" id="X58849">
    <property type="protein sequence ID" value="CAA41654.1"/>
    <property type="status" value="ALT_SEQ"/>
    <property type="molecule type" value="Genomic_DNA"/>
</dbReference>
<dbReference type="EMBL" id="AK031206">
    <property type="protein sequence ID" value="BAC27299.1"/>
    <property type="molecule type" value="mRNA"/>
</dbReference>
<dbReference type="EMBL" id="AL928644">
    <property type="status" value="NOT_ANNOTATED_CDS"/>
    <property type="molecule type" value="Genomic_DNA"/>
</dbReference>
<dbReference type="EMBL" id="CH466519">
    <property type="protein sequence ID" value="EDL27169.1"/>
    <property type="molecule type" value="Genomic_DNA"/>
</dbReference>
<dbReference type="EMBL" id="BC145656">
    <property type="protein sequence ID" value="AAI45657.1"/>
    <property type="molecule type" value="mRNA"/>
</dbReference>
<dbReference type="CCDS" id="CCDS38147.1"/>
<dbReference type="PIR" id="S16317">
    <property type="entry name" value="S16317"/>
</dbReference>
<dbReference type="RefSeq" id="NP_032300.2">
    <property type="nucleotide sequence ID" value="NM_008274.3"/>
</dbReference>
<dbReference type="SMR" id="P23812"/>
<dbReference type="BioGRID" id="200394">
    <property type="interactions" value="9"/>
</dbReference>
<dbReference type="FunCoup" id="P23812">
    <property type="interactions" value="141"/>
</dbReference>
<dbReference type="IntAct" id="P23812">
    <property type="interactions" value="10"/>
</dbReference>
<dbReference type="STRING" id="10090.ENSMUSP00000001878"/>
<dbReference type="iPTMnet" id="P23812"/>
<dbReference type="PhosphoSitePlus" id="P23812"/>
<dbReference type="PaxDb" id="10090-ENSMUSP00000001878"/>
<dbReference type="Antibodypedia" id="10810">
    <property type="antibodies" value="237 antibodies from 31 providers"/>
</dbReference>
<dbReference type="DNASU" id="15432"/>
<dbReference type="Ensembl" id="ENSMUST00000001878.6">
    <property type="protein sequence ID" value="ENSMUSP00000001878.5"/>
    <property type="gene ID" value="ENSMUSG00000001823.6"/>
</dbReference>
<dbReference type="GeneID" id="15432"/>
<dbReference type="KEGG" id="mmu:15432"/>
<dbReference type="UCSC" id="uc008kdv.2">
    <property type="organism name" value="mouse"/>
</dbReference>
<dbReference type="AGR" id="MGI:96204"/>
<dbReference type="CTD" id="3238"/>
<dbReference type="MGI" id="MGI:96204">
    <property type="gene designation" value="Hoxd12"/>
</dbReference>
<dbReference type="VEuPathDB" id="HostDB:ENSMUSG00000001823"/>
<dbReference type="eggNOG" id="KOG0487">
    <property type="taxonomic scope" value="Eukaryota"/>
</dbReference>
<dbReference type="GeneTree" id="ENSGT00940000159938"/>
<dbReference type="HOGENOM" id="CLU_087968_0_0_1"/>
<dbReference type="InParanoid" id="P23812"/>
<dbReference type="OMA" id="YYAHDTS"/>
<dbReference type="OrthoDB" id="6159439at2759"/>
<dbReference type="PhylomeDB" id="P23812"/>
<dbReference type="TreeFam" id="TF351604"/>
<dbReference type="BioGRID-ORCS" id="15432">
    <property type="hits" value="3 hits in 77 CRISPR screens"/>
</dbReference>
<dbReference type="PRO" id="PR:P23812"/>
<dbReference type="Proteomes" id="UP000000589">
    <property type="component" value="Chromosome 2"/>
</dbReference>
<dbReference type="RNAct" id="P23812">
    <property type="molecule type" value="protein"/>
</dbReference>
<dbReference type="Bgee" id="ENSMUSG00000001823">
    <property type="expression patterns" value="Expressed in undifferentiated genital tubercle and 76 other cell types or tissues"/>
</dbReference>
<dbReference type="GO" id="GO:0005634">
    <property type="term" value="C:nucleus"/>
    <property type="evidence" value="ECO:0007669"/>
    <property type="project" value="UniProtKB-SubCell"/>
</dbReference>
<dbReference type="GO" id="GO:0005667">
    <property type="term" value="C:transcription regulator complex"/>
    <property type="evidence" value="ECO:0000314"/>
    <property type="project" value="MGI"/>
</dbReference>
<dbReference type="GO" id="GO:0000981">
    <property type="term" value="F:DNA-binding transcription factor activity, RNA polymerase II-specific"/>
    <property type="evidence" value="ECO:0007669"/>
    <property type="project" value="InterPro"/>
</dbReference>
<dbReference type="GO" id="GO:1990837">
    <property type="term" value="F:sequence-specific double-stranded DNA binding"/>
    <property type="evidence" value="ECO:0007669"/>
    <property type="project" value="Ensembl"/>
</dbReference>
<dbReference type="GO" id="GO:0042733">
    <property type="term" value="P:embryonic digit morphogenesis"/>
    <property type="evidence" value="ECO:0000316"/>
    <property type="project" value="MGI"/>
</dbReference>
<dbReference type="GO" id="GO:0007389">
    <property type="term" value="P:pattern specification process"/>
    <property type="evidence" value="ECO:0000316"/>
    <property type="project" value="MGI"/>
</dbReference>
<dbReference type="GO" id="GO:0001501">
    <property type="term" value="P:skeletal system development"/>
    <property type="evidence" value="ECO:0000315"/>
    <property type="project" value="MGI"/>
</dbReference>
<dbReference type="CDD" id="cd00086">
    <property type="entry name" value="homeodomain"/>
    <property type="match status" value="1"/>
</dbReference>
<dbReference type="FunFam" id="1.10.10.60:FF:000130">
    <property type="entry name" value="Homeobox protein Hox-D12"/>
    <property type="match status" value="1"/>
</dbReference>
<dbReference type="Gene3D" id="1.10.10.60">
    <property type="entry name" value="Homeodomain-like"/>
    <property type="match status" value="1"/>
</dbReference>
<dbReference type="InterPro" id="IPR001356">
    <property type="entry name" value="HD"/>
</dbReference>
<dbReference type="InterPro" id="IPR020479">
    <property type="entry name" value="HD_metazoa"/>
</dbReference>
<dbReference type="InterPro" id="IPR017970">
    <property type="entry name" value="Homeobox_CS"/>
</dbReference>
<dbReference type="InterPro" id="IPR009057">
    <property type="entry name" value="Homeodomain-like_sf"/>
</dbReference>
<dbReference type="PANTHER" id="PTHR46440:SF1">
    <property type="entry name" value="HOMEOBOX PROTEIN HOX-D12"/>
    <property type="match status" value="1"/>
</dbReference>
<dbReference type="PANTHER" id="PTHR46440">
    <property type="entry name" value="HOMEOBOX PROTEIN HOX-D12-RELATED"/>
    <property type="match status" value="1"/>
</dbReference>
<dbReference type="Pfam" id="PF00046">
    <property type="entry name" value="Homeodomain"/>
    <property type="match status" value="1"/>
</dbReference>
<dbReference type="PRINTS" id="PR00024">
    <property type="entry name" value="HOMEOBOX"/>
</dbReference>
<dbReference type="SMART" id="SM00389">
    <property type="entry name" value="HOX"/>
    <property type="match status" value="1"/>
</dbReference>
<dbReference type="SUPFAM" id="SSF46689">
    <property type="entry name" value="Homeodomain-like"/>
    <property type="match status" value="1"/>
</dbReference>
<dbReference type="PROSITE" id="PS00027">
    <property type="entry name" value="HOMEOBOX_1"/>
    <property type="match status" value="1"/>
</dbReference>
<dbReference type="PROSITE" id="PS50071">
    <property type="entry name" value="HOMEOBOX_2"/>
    <property type="match status" value="1"/>
</dbReference>
<feature type="chain" id="PRO_0000200239" description="Homeobox protein Hox-D12">
    <location>
        <begin position="1"/>
        <end position="268"/>
    </location>
</feature>
<feature type="DNA-binding region" description="Homeobox" evidence="1">
    <location>
        <begin position="200"/>
        <end position="259"/>
    </location>
</feature>
<feature type="region of interest" description="Disordered" evidence="2">
    <location>
        <begin position="102"/>
        <end position="124"/>
    </location>
</feature>
<keyword id="KW-0217">Developmental protein</keyword>
<keyword id="KW-0238">DNA-binding</keyword>
<keyword id="KW-0371">Homeobox</keyword>
<keyword id="KW-0539">Nucleus</keyword>
<keyword id="KW-1185">Reference proteome</keyword>
<keyword id="KW-0804">Transcription</keyword>
<keyword id="KW-0805">Transcription regulation</keyword>
<gene>
    <name type="primary">Hoxd12</name>
    <name type="synonym">Hox-4.7</name>
    <name type="synonym">Hoxd-12</name>
</gene>
<name>HXD12_MOUSE</name>
<sequence>MCERSLYRAGYVGSLLNLQSPDSFYFSNLRANGSQLAALPPISYPRSALPWATTPASCTPAQPATASAFGGFSQPYLTGSGPIGLQSPGAKDGPEDQVKFYTPDAPTASEERSRTRPPFAPESSLVHSALKGTKYDYAGVGRTAPGSATLLQGAPCASSFKEDTKGPLNLNMAVQVAGVASCLRSSLPDGLPWGAAPGRARKKRKPYTKQQIAELENEFLVNEFINRQKRKELSNRLNLSDQQVKIWFQNRRMKKKRVVQREQALALY</sequence>
<evidence type="ECO:0000255" key="1">
    <source>
        <dbReference type="PROSITE-ProRule" id="PRU00108"/>
    </source>
</evidence>
<evidence type="ECO:0000256" key="2">
    <source>
        <dbReference type="SAM" id="MobiDB-lite"/>
    </source>
</evidence>
<evidence type="ECO:0000305" key="3"/>
<comment type="function">
    <text>Sequence-specific transcription factor which is part of a developmental regulatory system that provides cells with specific positional identities on the anterior-posterior axis.</text>
</comment>
<comment type="subcellular location">
    <subcellularLocation>
        <location>Nucleus</location>
    </subcellularLocation>
</comment>
<comment type="developmental stage">
    <text>Expressed during development of the posterior part of the body.</text>
</comment>
<comment type="similarity">
    <text evidence="3">Belongs to the Abd-B homeobox family.</text>
</comment>
<comment type="sequence caution" evidence="3">
    <conflict type="erroneous gene model prediction">
        <sequence resource="EMBL-CDS" id="CAA41654"/>
    </conflict>
</comment>
<organism>
    <name type="scientific">Mus musculus</name>
    <name type="common">Mouse</name>
    <dbReference type="NCBI Taxonomy" id="10090"/>
    <lineage>
        <taxon>Eukaryota</taxon>
        <taxon>Metazoa</taxon>
        <taxon>Chordata</taxon>
        <taxon>Craniata</taxon>
        <taxon>Vertebrata</taxon>
        <taxon>Euteleostomi</taxon>
        <taxon>Mammalia</taxon>
        <taxon>Eutheria</taxon>
        <taxon>Euarchontoglires</taxon>
        <taxon>Glires</taxon>
        <taxon>Rodentia</taxon>
        <taxon>Myomorpha</taxon>
        <taxon>Muroidea</taxon>
        <taxon>Muridae</taxon>
        <taxon>Murinae</taxon>
        <taxon>Mus</taxon>
        <taxon>Mus</taxon>
    </lineage>
</organism>
<accession>P23812</accession>
<accession>Q8BSN0</accession>
<proteinExistence type="evidence at transcript level"/>
<reference key="1">
    <citation type="journal article" date="1991" name="EMBO J.">
        <title>Murine genes related to the Drosophila AbdB homeotic genes are sequentially expressed during development of the posterior part of the body.</title>
        <authorList>
            <person name="Izpisua-Belmonte J.-C."/>
            <person name="Falkenstein H."/>
            <person name="Dolle P."/>
            <person name="Renucci A."/>
            <person name="Duboule D."/>
        </authorList>
    </citation>
    <scope>NUCLEOTIDE SEQUENCE [GENOMIC DNA]</scope>
</reference>
<reference key="2">
    <citation type="journal article" date="2005" name="Science">
        <title>The transcriptional landscape of the mammalian genome.</title>
        <authorList>
            <person name="Carninci P."/>
            <person name="Kasukawa T."/>
            <person name="Katayama S."/>
            <person name="Gough J."/>
            <person name="Frith M.C."/>
            <person name="Maeda N."/>
            <person name="Oyama R."/>
            <person name="Ravasi T."/>
            <person name="Lenhard B."/>
            <person name="Wells C."/>
            <person name="Kodzius R."/>
            <person name="Shimokawa K."/>
            <person name="Bajic V.B."/>
            <person name="Brenner S.E."/>
            <person name="Batalov S."/>
            <person name="Forrest A.R."/>
            <person name="Zavolan M."/>
            <person name="Davis M.J."/>
            <person name="Wilming L.G."/>
            <person name="Aidinis V."/>
            <person name="Allen J.E."/>
            <person name="Ambesi-Impiombato A."/>
            <person name="Apweiler R."/>
            <person name="Aturaliya R.N."/>
            <person name="Bailey T.L."/>
            <person name="Bansal M."/>
            <person name="Baxter L."/>
            <person name="Beisel K.W."/>
            <person name="Bersano T."/>
            <person name="Bono H."/>
            <person name="Chalk A.M."/>
            <person name="Chiu K.P."/>
            <person name="Choudhary V."/>
            <person name="Christoffels A."/>
            <person name="Clutterbuck D.R."/>
            <person name="Crowe M.L."/>
            <person name="Dalla E."/>
            <person name="Dalrymple B.P."/>
            <person name="de Bono B."/>
            <person name="Della Gatta G."/>
            <person name="di Bernardo D."/>
            <person name="Down T."/>
            <person name="Engstrom P."/>
            <person name="Fagiolini M."/>
            <person name="Faulkner G."/>
            <person name="Fletcher C.F."/>
            <person name="Fukushima T."/>
            <person name="Furuno M."/>
            <person name="Futaki S."/>
            <person name="Gariboldi M."/>
            <person name="Georgii-Hemming P."/>
            <person name="Gingeras T.R."/>
            <person name="Gojobori T."/>
            <person name="Green R.E."/>
            <person name="Gustincich S."/>
            <person name="Harbers M."/>
            <person name="Hayashi Y."/>
            <person name="Hensch T.K."/>
            <person name="Hirokawa N."/>
            <person name="Hill D."/>
            <person name="Huminiecki L."/>
            <person name="Iacono M."/>
            <person name="Ikeo K."/>
            <person name="Iwama A."/>
            <person name="Ishikawa T."/>
            <person name="Jakt M."/>
            <person name="Kanapin A."/>
            <person name="Katoh M."/>
            <person name="Kawasawa Y."/>
            <person name="Kelso J."/>
            <person name="Kitamura H."/>
            <person name="Kitano H."/>
            <person name="Kollias G."/>
            <person name="Krishnan S.P."/>
            <person name="Kruger A."/>
            <person name="Kummerfeld S.K."/>
            <person name="Kurochkin I.V."/>
            <person name="Lareau L.F."/>
            <person name="Lazarevic D."/>
            <person name="Lipovich L."/>
            <person name="Liu J."/>
            <person name="Liuni S."/>
            <person name="McWilliam S."/>
            <person name="Madan Babu M."/>
            <person name="Madera M."/>
            <person name="Marchionni L."/>
            <person name="Matsuda H."/>
            <person name="Matsuzawa S."/>
            <person name="Miki H."/>
            <person name="Mignone F."/>
            <person name="Miyake S."/>
            <person name="Morris K."/>
            <person name="Mottagui-Tabar S."/>
            <person name="Mulder N."/>
            <person name="Nakano N."/>
            <person name="Nakauchi H."/>
            <person name="Ng P."/>
            <person name="Nilsson R."/>
            <person name="Nishiguchi S."/>
            <person name="Nishikawa S."/>
            <person name="Nori F."/>
            <person name="Ohara O."/>
            <person name="Okazaki Y."/>
            <person name="Orlando V."/>
            <person name="Pang K.C."/>
            <person name="Pavan W.J."/>
            <person name="Pavesi G."/>
            <person name="Pesole G."/>
            <person name="Petrovsky N."/>
            <person name="Piazza S."/>
            <person name="Reed J."/>
            <person name="Reid J.F."/>
            <person name="Ring B.Z."/>
            <person name="Ringwald M."/>
            <person name="Rost B."/>
            <person name="Ruan Y."/>
            <person name="Salzberg S.L."/>
            <person name="Sandelin A."/>
            <person name="Schneider C."/>
            <person name="Schoenbach C."/>
            <person name="Sekiguchi K."/>
            <person name="Semple C.A."/>
            <person name="Seno S."/>
            <person name="Sessa L."/>
            <person name="Sheng Y."/>
            <person name="Shibata Y."/>
            <person name="Shimada H."/>
            <person name="Shimada K."/>
            <person name="Silva D."/>
            <person name="Sinclair B."/>
            <person name="Sperling S."/>
            <person name="Stupka E."/>
            <person name="Sugiura K."/>
            <person name="Sultana R."/>
            <person name="Takenaka Y."/>
            <person name="Taki K."/>
            <person name="Tammoja K."/>
            <person name="Tan S.L."/>
            <person name="Tang S."/>
            <person name="Taylor M.S."/>
            <person name="Tegner J."/>
            <person name="Teichmann S.A."/>
            <person name="Ueda H.R."/>
            <person name="van Nimwegen E."/>
            <person name="Verardo R."/>
            <person name="Wei C.L."/>
            <person name="Yagi K."/>
            <person name="Yamanishi H."/>
            <person name="Zabarovsky E."/>
            <person name="Zhu S."/>
            <person name="Zimmer A."/>
            <person name="Hide W."/>
            <person name="Bult C."/>
            <person name="Grimmond S.M."/>
            <person name="Teasdale R.D."/>
            <person name="Liu E.T."/>
            <person name="Brusic V."/>
            <person name="Quackenbush J."/>
            <person name="Wahlestedt C."/>
            <person name="Mattick J.S."/>
            <person name="Hume D.A."/>
            <person name="Kai C."/>
            <person name="Sasaki D."/>
            <person name="Tomaru Y."/>
            <person name="Fukuda S."/>
            <person name="Kanamori-Katayama M."/>
            <person name="Suzuki M."/>
            <person name="Aoki J."/>
            <person name="Arakawa T."/>
            <person name="Iida J."/>
            <person name="Imamura K."/>
            <person name="Itoh M."/>
            <person name="Kato T."/>
            <person name="Kawaji H."/>
            <person name="Kawagashira N."/>
            <person name="Kawashima T."/>
            <person name="Kojima M."/>
            <person name="Kondo S."/>
            <person name="Konno H."/>
            <person name="Nakano K."/>
            <person name="Ninomiya N."/>
            <person name="Nishio T."/>
            <person name="Okada M."/>
            <person name="Plessy C."/>
            <person name="Shibata K."/>
            <person name="Shiraki T."/>
            <person name="Suzuki S."/>
            <person name="Tagami M."/>
            <person name="Waki K."/>
            <person name="Watahiki A."/>
            <person name="Okamura-Oho Y."/>
            <person name="Suzuki H."/>
            <person name="Kawai J."/>
            <person name="Hayashizaki Y."/>
        </authorList>
    </citation>
    <scope>NUCLEOTIDE SEQUENCE [LARGE SCALE MRNA]</scope>
    <source>
        <strain>C57BL/6J</strain>
        <tissue>Forelimb</tissue>
    </source>
</reference>
<reference key="3">
    <citation type="journal article" date="2009" name="PLoS Biol.">
        <title>Lineage-specific biology revealed by a finished genome assembly of the mouse.</title>
        <authorList>
            <person name="Church D.M."/>
            <person name="Goodstadt L."/>
            <person name="Hillier L.W."/>
            <person name="Zody M.C."/>
            <person name="Goldstein S."/>
            <person name="She X."/>
            <person name="Bult C.J."/>
            <person name="Agarwala R."/>
            <person name="Cherry J.L."/>
            <person name="DiCuccio M."/>
            <person name="Hlavina W."/>
            <person name="Kapustin Y."/>
            <person name="Meric P."/>
            <person name="Maglott D."/>
            <person name="Birtle Z."/>
            <person name="Marques A.C."/>
            <person name="Graves T."/>
            <person name="Zhou S."/>
            <person name="Teague B."/>
            <person name="Potamousis K."/>
            <person name="Churas C."/>
            <person name="Place M."/>
            <person name="Herschleb J."/>
            <person name="Runnheim R."/>
            <person name="Forrest D."/>
            <person name="Amos-Landgraf J."/>
            <person name="Schwartz D.C."/>
            <person name="Cheng Z."/>
            <person name="Lindblad-Toh K."/>
            <person name="Eichler E.E."/>
            <person name="Ponting C.P."/>
        </authorList>
    </citation>
    <scope>NUCLEOTIDE SEQUENCE [LARGE SCALE GENOMIC DNA]</scope>
    <source>
        <strain>C57BL/6J</strain>
    </source>
</reference>
<reference key="4">
    <citation type="submission" date="2005-07" db="EMBL/GenBank/DDBJ databases">
        <authorList>
            <person name="Mural R.J."/>
            <person name="Adams M.D."/>
            <person name="Myers E.W."/>
            <person name="Smith H.O."/>
            <person name="Venter J.C."/>
        </authorList>
    </citation>
    <scope>NUCLEOTIDE SEQUENCE [LARGE SCALE GENOMIC DNA]</scope>
</reference>
<reference key="5">
    <citation type="journal article" date="2004" name="Genome Res.">
        <title>The status, quality, and expansion of the NIH full-length cDNA project: the Mammalian Gene Collection (MGC).</title>
        <authorList>
            <consortium name="The MGC Project Team"/>
        </authorList>
    </citation>
    <scope>NUCLEOTIDE SEQUENCE [LARGE SCALE MRNA]</scope>
</reference>
<protein>
    <recommendedName>
        <fullName>Homeobox protein Hox-D12</fullName>
    </recommendedName>
    <alternativeName>
        <fullName>Homeobox protein Hox-4.7</fullName>
    </alternativeName>
    <alternativeName>
        <fullName>Homeobox protein Hox-5.6</fullName>
    </alternativeName>
</protein>